<name>RR19_GOSBA</name>
<protein>
    <recommendedName>
        <fullName evidence="1">Small ribosomal subunit protein uS19c</fullName>
    </recommendedName>
    <alternativeName>
        <fullName evidence="2">30S ribosomal protein S19, chloroplastic</fullName>
    </alternativeName>
</protein>
<keyword id="KW-0150">Chloroplast</keyword>
<keyword id="KW-0934">Plastid</keyword>
<keyword id="KW-0687">Ribonucleoprotein</keyword>
<keyword id="KW-0689">Ribosomal protein</keyword>
<keyword id="KW-0694">RNA-binding</keyword>
<keyword id="KW-0699">rRNA-binding</keyword>
<organism>
    <name type="scientific">Gossypium barbadense</name>
    <name type="common">Sea Island cotton</name>
    <name type="synonym">Hibiscus barbadensis</name>
    <dbReference type="NCBI Taxonomy" id="3634"/>
    <lineage>
        <taxon>Eukaryota</taxon>
        <taxon>Viridiplantae</taxon>
        <taxon>Streptophyta</taxon>
        <taxon>Embryophyta</taxon>
        <taxon>Tracheophyta</taxon>
        <taxon>Spermatophyta</taxon>
        <taxon>Magnoliopsida</taxon>
        <taxon>eudicotyledons</taxon>
        <taxon>Gunneridae</taxon>
        <taxon>Pentapetalae</taxon>
        <taxon>rosids</taxon>
        <taxon>malvids</taxon>
        <taxon>Malvales</taxon>
        <taxon>Malvaceae</taxon>
        <taxon>Malvoideae</taxon>
        <taxon>Gossypium</taxon>
    </lineage>
</organism>
<reference key="1">
    <citation type="journal article" date="2006" name="Genes Genet. Syst.">
        <title>Complete nucleotide sequence of the cotton (Gossypium barbadense L.) chloroplast genome with a comparative analysis of sequences among 9 dicot plants.</title>
        <authorList>
            <person name="Ibrahim R.I.H."/>
            <person name="Azuma J."/>
            <person name="Sakamoto M."/>
        </authorList>
    </citation>
    <scope>NUCLEOTIDE SEQUENCE [LARGE SCALE GENOMIC DNA]</scope>
</reference>
<sequence>MARSLKKNPFVANHLLKKIERLNTKAEKEIIITWSRASTIIPTMIGHTIAIHNGKEHLPIYITDRMVGHKLGEFAPTINFRGHAKNDNKSRR</sequence>
<geneLocation type="chloroplast"/>
<accession>A0ZZ75</accession>
<evidence type="ECO:0000255" key="1">
    <source>
        <dbReference type="HAMAP-Rule" id="MF_00531"/>
    </source>
</evidence>
<evidence type="ECO:0000305" key="2"/>
<feature type="chain" id="PRO_0000276907" description="Small ribosomal subunit protein uS19c">
    <location>
        <begin position="1"/>
        <end position="92"/>
    </location>
</feature>
<gene>
    <name evidence="1" type="primary">rps19</name>
</gene>
<proteinExistence type="inferred from homology"/>
<dbReference type="EMBL" id="AP009123">
    <property type="protein sequence ID" value="BAF41287.1"/>
    <property type="molecule type" value="Genomic_DNA"/>
</dbReference>
<dbReference type="RefSeq" id="YP_913227.1">
    <property type="nucleotide sequence ID" value="NC_008641.1"/>
</dbReference>
<dbReference type="SMR" id="A0ZZ75"/>
<dbReference type="GeneID" id="4575253"/>
<dbReference type="OrthoDB" id="938649at2759"/>
<dbReference type="GO" id="GO:0009507">
    <property type="term" value="C:chloroplast"/>
    <property type="evidence" value="ECO:0007669"/>
    <property type="project" value="UniProtKB-SubCell"/>
</dbReference>
<dbReference type="GO" id="GO:0005763">
    <property type="term" value="C:mitochondrial small ribosomal subunit"/>
    <property type="evidence" value="ECO:0007669"/>
    <property type="project" value="TreeGrafter"/>
</dbReference>
<dbReference type="GO" id="GO:0019843">
    <property type="term" value="F:rRNA binding"/>
    <property type="evidence" value="ECO:0007669"/>
    <property type="project" value="UniProtKB-UniRule"/>
</dbReference>
<dbReference type="GO" id="GO:0003735">
    <property type="term" value="F:structural constituent of ribosome"/>
    <property type="evidence" value="ECO:0007669"/>
    <property type="project" value="InterPro"/>
</dbReference>
<dbReference type="GO" id="GO:0000028">
    <property type="term" value="P:ribosomal small subunit assembly"/>
    <property type="evidence" value="ECO:0007669"/>
    <property type="project" value="TreeGrafter"/>
</dbReference>
<dbReference type="GO" id="GO:0006412">
    <property type="term" value="P:translation"/>
    <property type="evidence" value="ECO:0007669"/>
    <property type="project" value="UniProtKB-UniRule"/>
</dbReference>
<dbReference type="FunFam" id="3.30.860.10:FF:000001">
    <property type="entry name" value="30S ribosomal protein S19"/>
    <property type="match status" value="1"/>
</dbReference>
<dbReference type="Gene3D" id="3.30.860.10">
    <property type="entry name" value="30s Ribosomal Protein S19, Chain A"/>
    <property type="match status" value="1"/>
</dbReference>
<dbReference type="HAMAP" id="MF_00531">
    <property type="entry name" value="Ribosomal_uS19"/>
    <property type="match status" value="1"/>
</dbReference>
<dbReference type="InterPro" id="IPR002222">
    <property type="entry name" value="Ribosomal_uS19"/>
</dbReference>
<dbReference type="InterPro" id="IPR005732">
    <property type="entry name" value="Ribosomal_uS19_bac-type"/>
</dbReference>
<dbReference type="InterPro" id="IPR020934">
    <property type="entry name" value="Ribosomal_uS19_CS"/>
</dbReference>
<dbReference type="InterPro" id="IPR023575">
    <property type="entry name" value="Ribosomal_uS19_SF"/>
</dbReference>
<dbReference type="NCBIfam" id="TIGR01050">
    <property type="entry name" value="rpsS_bact"/>
    <property type="match status" value="1"/>
</dbReference>
<dbReference type="PANTHER" id="PTHR11880">
    <property type="entry name" value="RIBOSOMAL PROTEIN S19P FAMILY MEMBER"/>
    <property type="match status" value="1"/>
</dbReference>
<dbReference type="PANTHER" id="PTHR11880:SF8">
    <property type="entry name" value="SMALL RIBOSOMAL SUBUNIT PROTEIN US19M"/>
    <property type="match status" value="1"/>
</dbReference>
<dbReference type="Pfam" id="PF00203">
    <property type="entry name" value="Ribosomal_S19"/>
    <property type="match status" value="1"/>
</dbReference>
<dbReference type="PIRSF" id="PIRSF002144">
    <property type="entry name" value="Ribosomal_S19"/>
    <property type="match status" value="1"/>
</dbReference>
<dbReference type="PRINTS" id="PR00975">
    <property type="entry name" value="RIBOSOMALS19"/>
</dbReference>
<dbReference type="SUPFAM" id="SSF54570">
    <property type="entry name" value="Ribosomal protein S19"/>
    <property type="match status" value="1"/>
</dbReference>
<dbReference type="PROSITE" id="PS00323">
    <property type="entry name" value="RIBOSOMAL_S19"/>
    <property type="match status" value="1"/>
</dbReference>
<comment type="function">
    <text evidence="1">Protein S19 forms a complex with S13 that binds strongly to the 16S ribosomal RNA.</text>
</comment>
<comment type="subcellular location">
    <subcellularLocation>
        <location>Plastid</location>
        <location>Chloroplast</location>
    </subcellularLocation>
</comment>
<comment type="similarity">
    <text evidence="1">Belongs to the universal ribosomal protein uS19 family.</text>
</comment>